<reference key="1">
    <citation type="journal article" date="2007" name="Proc. Natl. Acad. Sci. U.S.A.">
        <title>Genome and proteome of long-chain alkane degrading Geobacillus thermodenitrificans NG80-2 isolated from a deep-subsurface oil reservoir.</title>
        <authorList>
            <person name="Feng L."/>
            <person name="Wang W."/>
            <person name="Cheng J."/>
            <person name="Ren Y."/>
            <person name="Zhao G."/>
            <person name="Gao C."/>
            <person name="Tang Y."/>
            <person name="Liu X."/>
            <person name="Han W."/>
            <person name="Peng X."/>
            <person name="Liu R."/>
            <person name="Wang L."/>
        </authorList>
    </citation>
    <scope>NUCLEOTIDE SEQUENCE [LARGE SCALE GENOMIC DNA]</scope>
    <source>
        <strain>NG80-2</strain>
    </source>
</reference>
<evidence type="ECO:0000255" key="1">
    <source>
        <dbReference type="HAMAP-Rule" id="MF_01542"/>
    </source>
</evidence>
<evidence type="ECO:0000305" key="2"/>
<feature type="chain" id="PRO_0000292956" description="UPF0349 protein GTNG_2908">
    <location>
        <begin position="1"/>
        <end position="79"/>
    </location>
</feature>
<sequence length="79" mass="8962">MILPIIEFCISNLASGSQKAMEILEKDPNLDIIEYSCLSYCTRCADTLFALVNGEFVSGETPEQLVENIYRHLEENPMF</sequence>
<protein>
    <recommendedName>
        <fullName evidence="1">UPF0349 protein GTNG_2908</fullName>
    </recommendedName>
</protein>
<accession>A4ISE9</accession>
<name>Y2908_GEOTN</name>
<proteinExistence type="inferred from homology"/>
<gene>
    <name type="ordered locus">GTNG_2908</name>
</gene>
<dbReference type="EMBL" id="CP000557">
    <property type="protein sequence ID" value="ABO68253.1"/>
    <property type="status" value="ALT_INIT"/>
    <property type="molecule type" value="Genomic_DNA"/>
</dbReference>
<dbReference type="RefSeq" id="WP_008881828.1">
    <property type="nucleotide sequence ID" value="NC_009328.1"/>
</dbReference>
<dbReference type="SMR" id="A4ISE9"/>
<dbReference type="GeneID" id="87622995"/>
<dbReference type="KEGG" id="gtn:GTNG_2908"/>
<dbReference type="eggNOG" id="COG4844">
    <property type="taxonomic scope" value="Bacteria"/>
</dbReference>
<dbReference type="HOGENOM" id="CLU_182025_0_0_9"/>
<dbReference type="Proteomes" id="UP000001578">
    <property type="component" value="Chromosome"/>
</dbReference>
<dbReference type="HAMAP" id="MF_01542">
    <property type="entry name" value="UPF0349"/>
    <property type="match status" value="1"/>
</dbReference>
<dbReference type="InterPro" id="IPR009910">
    <property type="entry name" value="DUF1450"/>
</dbReference>
<dbReference type="InterPro" id="IPR022916">
    <property type="entry name" value="UPF0349"/>
</dbReference>
<dbReference type="NCBIfam" id="NF010190">
    <property type="entry name" value="PRK13669.1"/>
    <property type="match status" value="1"/>
</dbReference>
<dbReference type="Pfam" id="PF07293">
    <property type="entry name" value="DUF1450"/>
    <property type="match status" value="1"/>
</dbReference>
<comment type="similarity">
    <text evidence="1">Belongs to the UPF0349 family.</text>
</comment>
<comment type="sequence caution" evidence="2">
    <conflict type="erroneous initiation">
        <sequence resource="EMBL-CDS" id="ABO68253"/>
    </conflict>
</comment>
<organism>
    <name type="scientific">Geobacillus thermodenitrificans (strain NG80-2)</name>
    <dbReference type="NCBI Taxonomy" id="420246"/>
    <lineage>
        <taxon>Bacteria</taxon>
        <taxon>Bacillati</taxon>
        <taxon>Bacillota</taxon>
        <taxon>Bacilli</taxon>
        <taxon>Bacillales</taxon>
        <taxon>Anoxybacillaceae</taxon>
        <taxon>Geobacillus</taxon>
    </lineage>
</organism>